<reference key="1">
    <citation type="journal article" date="1997" name="J. Bacteriol.">
        <title>Characterization of Lactococcus lactis UV-sensitive mutants obtained by ISS1 transposition.</title>
        <authorList>
            <person name="Duwat P."/>
            <person name="Cochu A."/>
            <person name="Ehrlich S.D."/>
            <person name="Gruss A."/>
        </authorList>
    </citation>
    <scope>NUCLEOTIDE SEQUENCE [GENOMIC DNA]</scope>
</reference>
<reference key="2">
    <citation type="journal article" date="2007" name="J. Bacteriol.">
        <title>The complete genome sequence of the lactic acid bacterial paradigm Lactococcus lactis subsp. cremoris MG1363.</title>
        <authorList>
            <person name="Wegmann U."/>
            <person name="O'Connell-Motherway M."/>
            <person name="Zomer A."/>
            <person name="Buist G."/>
            <person name="Shearman C."/>
            <person name="Canchaya C."/>
            <person name="Ventura M."/>
            <person name="Goesmann A."/>
            <person name="Gasson M.J."/>
            <person name="Kuipers O.P."/>
            <person name="van Sinderen D."/>
            <person name="Kok J."/>
        </authorList>
    </citation>
    <scope>NUCLEOTIDE SEQUENCE [LARGE SCALE GENOMIC DNA]</scope>
    <source>
        <strain>MG1363</strain>
    </source>
</reference>
<feature type="chain" id="PRO_0000199826" description="Phosphopentomutase">
    <location>
        <begin position="1"/>
        <end position="411"/>
    </location>
</feature>
<feature type="binding site" evidence="1">
    <location>
        <position position="14"/>
    </location>
    <ligand>
        <name>Mn(2+)</name>
        <dbReference type="ChEBI" id="CHEBI:29035"/>
        <label>1</label>
    </ligand>
</feature>
<feature type="binding site" evidence="1">
    <location>
        <position position="306"/>
    </location>
    <ligand>
        <name>Mn(2+)</name>
        <dbReference type="ChEBI" id="CHEBI:29035"/>
        <label>2</label>
    </ligand>
</feature>
<feature type="binding site" evidence="1">
    <location>
        <position position="311"/>
    </location>
    <ligand>
        <name>Mn(2+)</name>
        <dbReference type="ChEBI" id="CHEBI:29035"/>
        <label>2</label>
    </ligand>
</feature>
<feature type="binding site" evidence="1">
    <location>
        <position position="347"/>
    </location>
    <ligand>
        <name>Mn(2+)</name>
        <dbReference type="ChEBI" id="CHEBI:29035"/>
        <label>1</label>
    </ligand>
</feature>
<feature type="binding site" evidence="1">
    <location>
        <position position="348"/>
    </location>
    <ligand>
        <name>Mn(2+)</name>
        <dbReference type="ChEBI" id="CHEBI:29035"/>
        <label>1</label>
    </ligand>
</feature>
<feature type="binding site" evidence="1">
    <location>
        <position position="359"/>
    </location>
    <ligand>
        <name>Mn(2+)</name>
        <dbReference type="ChEBI" id="CHEBI:29035"/>
        <label>2</label>
    </ligand>
</feature>
<accession>O32808</accession>
<accession>A2RLK7</accession>
<keyword id="KW-0963">Cytoplasm</keyword>
<keyword id="KW-0413">Isomerase</keyword>
<keyword id="KW-0464">Manganese</keyword>
<keyword id="KW-0479">Metal-binding</keyword>
<organism>
    <name type="scientific">Lactococcus lactis subsp. cremoris (strain MG1363)</name>
    <dbReference type="NCBI Taxonomy" id="416870"/>
    <lineage>
        <taxon>Bacteria</taxon>
        <taxon>Bacillati</taxon>
        <taxon>Bacillota</taxon>
        <taxon>Bacilli</taxon>
        <taxon>Lactobacillales</taxon>
        <taxon>Streptococcaceae</taxon>
        <taxon>Lactococcus</taxon>
        <taxon>Lactococcus cremoris subsp. cremoris</taxon>
    </lineage>
</organism>
<gene>
    <name evidence="1" type="primary">deoB</name>
    <name type="ordered locus">llmg_1601</name>
</gene>
<name>DEOB_LACLM</name>
<sequence>MPKKFGRIHLVVMDSVGIGAAPDADKFFNHDVETHEAINDVKSDTIGHISEIRGLDVPNLQKLGWGNIPRESPLKTIPAAQKPAAYVTKLEEISKGKDTMTGHWEIMGLNIQTPFPTYPEGYPEDLLEKIEEFSGRKIIREANKPYSGTAVIEDFGPRQLETGELIIYTSADPVLQIAAHEDVISREELYKICEYVRSITLEGSGIMIGRIIARPYVGEAGNFERTDGRRDYALSPFAETVLEKLYKAGIDTYSVGKISDIFNTVGVKYDMGHNHNDMDGVDRLLKAMTKTEFTEGFSFTNLVDFDAKYGHRRDVEGYGKAIEDFDGRLPEIIDAMKEDDLLMITADHGNDPSYVGTDHTREYIPLVIFSKSFKEPKVLPVGHFADISATIAENFSVKKAQTGESFLDALV</sequence>
<proteinExistence type="inferred from homology"/>
<dbReference type="EC" id="5.4.2.7" evidence="1"/>
<dbReference type="EMBL" id="U80410">
    <property type="protein sequence ID" value="AAC45496.1"/>
    <property type="molecule type" value="Genomic_DNA"/>
</dbReference>
<dbReference type="EMBL" id="AM406671">
    <property type="protein sequence ID" value="CAL98175.1"/>
    <property type="molecule type" value="Genomic_DNA"/>
</dbReference>
<dbReference type="RefSeq" id="WP_011835429.1">
    <property type="nucleotide sequence ID" value="NC_009004.1"/>
</dbReference>
<dbReference type="SMR" id="O32808"/>
<dbReference type="STRING" id="416870.llmg_1601"/>
<dbReference type="KEGG" id="llm:llmg_1601"/>
<dbReference type="eggNOG" id="COG1015">
    <property type="taxonomic scope" value="Bacteria"/>
</dbReference>
<dbReference type="HOGENOM" id="CLU_053861_0_0_9"/>
<dbReference type="OrthoDB" id="9769930at2"/>
<dbReference type="PhylomeDB" id="O32808"/>
<dbReference type="UniPathway" id="UPA00002">
    <property type="reaction ID" value="UER00467"/>
</dbReference>
<dbReference type="Proteomes" id="UP000000364">
    <property type="component" value="Chromosome"/>
</dbReference>
<dbReference type="GO" id="GO:0005829">
    <property type="term" value="C:cytosol"/>
    <property type="evidence" value="ECO:0007669"/>
    <property type="project" value="TreeGrafter"/>
</dbReference>
<dbReference type="GO" id="GO:0000287">
    <property type="term" value="F:magnesium ion binding"/>
    <property type="evidence" value="ECO:0007669"/>
    <property type="project" value="InterPro"/>
</dbReference>
<dbReference type="GO" id="GO:0030145">
    <property type="term" value="F:manganese ion binding"/>
    <property type="evidence" value="ECO:0007669"/>
    <property type="project" value="UniProtKB-UniRule"/>
</dbReference>
<dbReference type="GO" id="GO:0008973">
    <property type="term" value="F:phosphopentomutase activity"/>
    <property type="evidence" value="ECO:0007669"/>
    <property type="project" value="UniProtKB-UniRule"/>
</dbReference>
<dbReference type="GO" id="GO:0006018">
    <property type="term" value="P:2-deoxyribose 1-phosphate catabolic process"/>
    <property type="evidence" value="ECO:0007669"/>
    <property type="project" value="UniProtKB-UniRule"/>
</dbReference>
<dbReference type="GO" id="GO:0006015">
    <property type="term" value="P:5-phosphoribose 1-diphosphate biosynthetic process"/>
    <property type="evidence" value="ECO:0007669"/>
    <property type="project" value="UniProtKB-UniPathway"/>
</dbReference>
<dbReference type="GO" id="GO:0043094">
    <property type="term" value="P:metabolic compound salvage"/>
    <property type="evidence" value="ECO:0007669"/>
    <property type="project" value="InterPro"/>
</dbReference>
<dbReference type="GO" id="GO:0009117">
    <property type="term" value="P:nucleotide metabolic process"/>
    <property type="evidence" value="ECO:0007669"/>
    <property type="project" value="InterPro"/>
</dbReference>
<dbReference type="CDD" id="cd16009">
    <property type="entry name" value="PPM"/>
    <property type="match status" value="1"/>
</dbReference>
<dbReference type="FunFam" id="3.30.70.1250:FF:000001">
    <property type="entry name" value="Phosphopentomutase"/>
    <property type="match status" value="1"/>
</dbReference>
<dbReference type="Gene3D" id="3.40.720.10">
    <property type="entry name" value="Alkaline Phosphatase, subunit A"/>
    <property type="match status" value="1"/>
</dbReference>
<dbReference type="Gene3D" id="3.30.70.1250">
    <property type="entry name" value="Phosphopentomutase"/>
    <property type="match status" value="1"/>
</dbReference>
<dbReference type="HAMAP" id="MF_00740">
    <property type="entry name" value="Phosphopentomut"/>
    <property type="match status" value="1"/>
</dbReference>
<dbReference type="InterPro" id="IPR017850">
    <property type="entry name" value="Alkaline_phosphatase_core_sf"/>
</dbReference>
<dbReference type="InterPro" id="IPR010045">
    <property type="entry name" value="DeoB"/>
</dbReference>
<dbReference type="InterPro" id="IPR006124">
    <property type="entry name" value="Metalloenzyme"/>
</dbReference>
<dbReference type="InterPro" id="IPR024052">
    <property type="entry name" value="Phosphopentomutase_DeoB_cap_sf"/>
</dbReference>
<dbReference type="NCBIfam" id="TIGR01696">
    <property type="entry name" value="deoB"/>
    <property type="match status" value="1"/>
</dbReference>
<dbReference type="NCBIfam" id="NF003766">
    <property type="entry name" value="PRK05362.1"/>
    <property type="match status" value="1"/>
</dbReference>
<dbReference type="PANTHER" id="PTHR21110">
    <property type="entry name" value="PHOSPHOPENTOMUTASE"/>
    <property type="match status" value="1"/>
</dbReference>
<dbReference type="PANTHER" id="PTHR21110:SF0">
    <property type="entry name" value="PHOSPHOPENTOMUTASE"/>
    <property type="match status" value="1"/>
</dbReference>
<dbReference type="Pfam" id="PF01676">
    <property type="entry name" value="Metalloenzyme"/>
    <property type="match status" value="1"/>
</dbReference>
<dbReference type="PIRSF" id="PIRSF001491">
    <property type="entry name" value="Ppentomutase"/>
    <property type="match status" value="1"/>
</dbReference>
<dbReference type="SUPFAM" id="SSF53649">
    <property type="entry name" value="Alkaline phosphatase-like"/>
    <property type="match status" value="1"/>
</dbReference>
<dbReference type="SUPFAM" id="SSF143856">
    <property type="entry name" value="DeoB insert domain-like"/>
    <property type="match status" value="1"/>
</dbReference>
<protein>
    <recommendedName>
        <fullName evidence="1">Phosphopentomutase</fullName>
        <ecNumber evidence="1">5.4.2.7</ecNumber>
    </recommendedName>
    <alternativeName>
        <fullName evidence="1">Phosphodeoxyribomutase</fullName>
    </alternativeName>
</protein>
<comment type="function">
    <text evidence="1">Isomerase that catalyzes the conversion of deoxy-ribose 1-phosphate (dRib-1-P) and ribose 1-phosphate (Rib-1-P) to deoxy-ribose 5-phosphate (dRib-5-P) and ribose 5-phosphate (Rib-5-P), respectively.</text>
</comment>
<comment type="catalytic activity">
    <reaction evidence="1">
        <text>2-deoxy-alpha-D-ribose 1-phosphate = 2-deoxy-D-ribose 5-phosphate</text>
        <dbReference type="Rhea" id="RHEA:27658"/>
        <dbReference type="ChEBI" id="CHEBI:57259"/>
        <dbReference type="ChEBI" id="CHEBI:62877"/>
        <dbReference type="EC" id="5.4.2.7"/>
    </reaction>
</comment>
<comment type="catalytic activity">
    <reaction evidence="1">
        <text>alpha-D-ribose 1-phosphate = D-ribose 5-phosphate</text>
        <dbReference type="Rhea" id="RHEA:18793"/>
        <dbReference type="ChEBI" id="CHEBI:57720"/>
        <dbReference type="ChEBI" id="CHEBI:78346"/>
        <dbReference type="EC" id="5.4.2.7"/>
    </reaction>
</comment>
<comment type="cofactor">
    <cofactor evidence="1">
        <name>Mn(2+)</name>
        <dbReference type="ChEBI" id="CHEBI:29035"/>
    </cofactor>
    <text evidence="1">Binds 2 manganese ions.</text>
</comment>
<comment type="pathway">
    <text evidence="1">Carbohydrate degradation; 2-deoxy-D-ribose 1-phosphate degradation; D-glyceraldehyde 3-phosphate and acetaldehyde from 2-deoxy-alpha-D-ribose 1-phosphate: step 1/2.</text>
</comment>
<comment type="subcellular location">
    <subcellularLocation>
        <location evidence="1">Cytoplasm</location>
    </subcellularLocation>
</comment>
<comment type="similarity">
    <text evidence="1">Belongs to the phosphopentomutase family.</text>
</comment>
<evidence type="ECO:0000255" key="1">
    <source>
        <dbReference type="HAMAP-Rule" id="MF_00740"/>
    </source>
</evidence>